<evidence type="ECO:0000255" key="1">
    <source>
        <dbReference type="HAMAP-Rule" id="MF_00083"/>
    </source>
</evidence>
<sequence length="204" mass="22411">MRLFVGLGNPGTKYQGNRHNIGFMVVDEIARRHGFAPWRRRFQGEASEGALDQERVVLLKPATYMNESGNAVQDAARFFKLTEGDVVVFHDEIELPPAKVRVKVGGGIAGHNGLRSISAHIGNEYRRVRLGVGHPGVKERVHAHVLNDFAKSERPWVEALVDVVAENAALLVTARDSAFQNKVHLAMQAKGFVEKDAKGDNGGK</sequence>
<proteinExistence type="inferred from homology"/>
<comment type="function">
    <text evidence="1">Hydrolyzes ribosome-free peptidyl-tRNAs (with 1 or more amino acids incorporated), which drop off the ribosome during protein synthesis, or as a result of ribosome stalling.</text>
</comment>
<comment type="function">
    <text evidence="1">Catalyzes the release of premature peptidyl moieties from peptidyl-tRNA molecules trapped in stalled 50S ribosomal subunits, and thus maintains levels of free tRNAs and 50S ribosomes.</text>
</comment>
<comment type="catalytic activity">
    <reaction evidence="1">
        <text>an N-acyl-L-alpha-aminoacyl-tRNA + H2O = an N-acyl-L-amino acid + a tRNA + H(+)</text>
        <dbReference type="Rhea" id="RHEA:54448"/>
        <dbReference type="Rhea" id="RHEA-COMP:10123"/>
        <dbReference type="Rhea" id="RHEA-COMP:13883"/>
        <dbReference type="ChEBI" id="CHEBI:15377"/>
        <dbReference type="ChEBI" id="CHEBI:15378"/>
        <dbReference type="ChEBI" id="CHEBI:59874"/>
        <dbReference type="ChEBI" id="CHEBI:78442"/>
        <dbReference type="ChEBI" id="CHEBI:138191"/>
        <dbReference type="EC" id="3.1.1.29"/>
    </reaction>
</comment>
<comment type="subunit">
    <text evidence="1">Monomer.</text>
</comment>
<comment type="subcellular location">
    <subcellularLocation>
        <location evidence="1">Cytoplasm</location>
    </subcellularLocation>
</comment>
<comment type="similarity">
    <text evidence="1">Belongs to the PTH family.</text>
</comment>
<protein>
    <recommendedName>
        <fullName evidence="1">Peptidyl-tRNA hydrolase</fullName>
        <shortName evidence="1">Pth</shortName>
        <ecNumber evidence="1">3.1.1.29</ecNumber>
    </recommendedName>
</protein>
<reference key="1">
    <citation type="submission" date="2006-03" db="EMBL/GenBank/DDBJ databases">
        <title>Complete sequence of chromosome of Nitrobacter hamburgensis X14.</title>
        <authorList>
            <consortium name="US DOE Joint Genome Institute"/>
            <person name="Copeland A."/>
            <person name="Lucas S."/>
            <person name="Lapidus A."/>
            <person name="Barry K."/>
            <person name="Detter J.C."/>
            <person name="Glavina del Rio T."/>
            <person name="Hammon N."/>
            <person name="Israni S."/>
            <person name="Dalin E."/>
            <person name="Tice H."/>
            <person name="Pitluck S."/>
            <person name="Chain P."/>
            <person name="Malfatti S."/>
            <person name="Shin M."/>
            <person name="Vergez L."/>
            <person name="Schmutz J."/>
            <person name="Larimer F."/>
            <person name="Land M."/>
            <person name="Hauser L."/>
            <person name="Kyrpides N."/>
            <person name="Ivanova N."/>
            <person name="Ward B."/>
            <person name="Arp D."/>
            <person name="Klotz M."/>
            <person name="Stein L."/>
            <person name="O'Mullan G."/>
            <person name="Starkenburg S."/>
            <person name="Sayavedra L."/>
            <person name="Poret-Peterson A.T."/>
            <person name="Gentry M.E."/>
            <person name="Bruce D."/>
            <person name="Richardson P."/>
        </authorList>
    </citation>
    <scope>NUCLEOTIDE SEQUENCE [LARGE SCALE GENOMIC DNA]</scope>
    <source>
        <strain>DSM 10229 / NCIMB 13809 / X14</strain>
    </source>
</reference>
<name>PTH_NITHX</name>
<feature type="chain" id="PRO_0000264066" description="Peptidyl-tRNA hydrolase">
    <location>
        <begin position="1"/>
        <end position="204"/>
    </location>
</feature>
<feature type="active site" description="Proton acceptor" evidence="1">
    <location>
        <position position="19"/>
    </location>
</feature>
<feature type="binding site" evidence="1">
    <location>
        <position position="14"/>
    </location>
    <ligand>
        <name>tRNA</name>
        <dbReference type="ChEBI" id="CHEBI:17843"/>
    </ligand>
</feature>
<feature type="binding site" evidence="1">
    <location>
        <position position="64"/>
    </location>
    <ligand>
        <name>tRNA</name>
        <dbReference type="ChEBI" id="CHEBI:17843"/>
    </ligand>
</feature>
<feature type="binding site" evidence="1">
    <location>
        <position position="66"/>
    </location>
    <ligand>
        <name>tRNA</name>
        <dbReference type="ChEBI" id="CHEBI:17843"/>
    </ligand>
</feature>
<feature type="binding site" evidence="1">
    <location>
        <position position="112"/>
    </location>
    <ligand>
        <name>tRNA</name>
        <dbReference type="ChEBI" id="CHEBI:17843"/>
    </ligand>
</feature>
<feature type="site" description="Discriminates between blocked and unblocked aminoacyl-tRNA" evidence="1">
    <location>
        <position position="9"/>
    </location>
</feature>
<feature type="site" description="Stabilizes the basic form of H active site to accept a proton" evidence="1">
    <location>
        <position position="91"/>
    </location>
</feature>
<organism>
    <name type="scientific">Nitrobacter hamburgensis (strain DSM 10229 / NCIMB 13809 / X14)</name>
    <dbReference type="NCBI Taxonomy" id="323097"/>
    <lineage>
        <taxon>Bacteria</taxon>
        <taxon>Pseudomonadati</taxon>
        <taxon>Pseudomonadota</taxon>
        <taxon>Alphaproteobacteria</taxon>
        <taxon>Hyphomicrobiales</taxon>
        <taxon>Nitrobacteraceae</taxon>
        <taxon>Nitrobacter</taxon>
    </lineage>
</organism>
<dbReference type="EC" id="3.1.1.29" evidence="1"/>
<dbReference type="EMBL" id="CP000319">
    <property type="protein sequence ID" value="ABE63839.1"/>
    <property type="molecule type" value="Genomic_DNA"/>
</dbReference>
<dbReference type="RefSeq" id="WP_011511498.1">
    <property type="nucleotide sequence ID" value="NC_007964.1"/>
</dbReference>
<dbReference type="SMR" id="Q1QIV8"/>
<dbReference type="STRING" id="323097.Nham_3102"/>
<dbReference type="KEGG" id="nha:Nham_3102"/>
<dbReference type="eggNOG" id="COG0193">
    <property type="taxonomic scope" value="Bacteria"/>
</dbReference>
<dbReference type="HOGENOM" id="CLU_062456_1_0_5"/>
<dbReference type="OrthoDB" id="9800507at2"/>
<dbReference type="Proteomes" id="UP000001953">
    <property type="component" value="Chromosome"/>
</dbReference>
<dbReference type="GO" id="GO:0005737">
    <property type="term" value="C:cytoplasm"/>
    <property type="evidence" value="ECO:0007669"/>
    <property type="project" value="UniProtKB-SubCell"/>
</dbReference>
<dbReference type="GO" id="GO:0004045">
    <property type="term" value="F:peptidyl-tRNA hydrolase activity"/>
    <property type="evidence" value="ECO:0007669"/>
    <property type="project" value="UniProtKB-UniRule"/>
</dbReference>
<dbReference type="GO" id="GO:0000049">
    <property type="term" value="F:tRNA binding"/>
    <property type="evidence" value="ECO:0007669"/>
    <property type="project" value="UniProtKB-UniRule"/>
</dbReference>
<dbReference type="GO" id="GO:0006515">
    <property type="term" value="P:protein quality control for misfolded or incompletely synthesized proteins"/>
    <property type="evidence" value="ECO:0007669"/>
    <property type="project" value="UniProtKB-UniRule"/>
</dbReference>
<dbReference type="GO" id="GO:0072344">
    <property type="term" value="P:rescue of stalled ribosome"/>
    <property type="evidence" value="ECO:0007669"/>
    <property type="project" value="UniProtKB-UniRule"/>
</dbReference>
<dbReference type="CDD" id="cd00462">
    <property type="entry name" value="PTH"/>
    <property type="match status" value="1"/>
</dbReference>
<dbReference type="FunFam" id="3.40.50.1470:FF:000001">
    <property type="entry name" value="Peptidyl-tRNA hydrolase"/>
    <property type="match status" value="1"/>
</dbReference>
<dbReference type="Gene3D" id="3.40.50.1470">
    <property type="entry name" value="Peptidyl-tRNA hydrolase"/>
    <property type="match status" value="1"/>
</dbReference>
<dbReference type="HAMAP" id="MF_00083">
    <property type="entry name" value="Pept_tRNA_hydro_bact"/>
    <property type="match status" value="1"/>
</dbReference>
<dbReference type="InterPro" id="IPR001328">
    <property type="entry name" value="Pept_tRNA_hydro"/>
</dbReference>
<dbReference type="InterPro" id="IPR018171">
    <property type="entry name" value="Pept_tRNA_hydro_CS"/>
</dbReference>
<dbReference type="InterPro" id="IPR036416">
    <property type="entry name" value="Pept_tRNA_hydro_sf"/>
</dbReference>
<dbReference type="NCBIfam" id="TIGR00447">
    <property type="entry name" value="pth"/>
    <property type="match status" value="1"/>
</dbReference>
<dbReference type="PANTHER" id="PTHR17224">
    <property type="entry name" value="PEPTIDYL-TRNA HYDROLASE"/>
    <property type="match status" value="1"/>
</dbReference>
<dbReference type="PANTHER" id="PTHR17224:SF1">
    <property type="entry name" value="PEPTIDYL-TRNA HYDROLASE"/>
    <property type="match status" value="1"/>
</dbReference>
<dbReference type="Pfam" id="PF01195">
    <property type="entry name" value="Pept_tRNA_hydro"/>
    <property type="match status" value="1"/>
</dbReference>
<dbReference type="SUPFAM" id="SSF53178">
    <property type="entry name" value="Peptidyl-tRNA hydrolase-like"/>
    <property type="match status" value="1"/>
</dbReference>
<dbReference type="PROSITE" id="PS01195">
    <property type="entry name" value="PEPT_TRNA_HYDROL_1"/>
    <property type="match status" value="1"/>
</dbReference>
<dbReference type="PROSITE" id="PS01196">
    <property type="entry name" value="PEPT_TRNA_HYDROL_2"/>
    <property type="match status" value="1"/>
</dbReference>
<gene>
    <name evidence="1" type="primary">pth</name>
    <name type="ordered locus">Nham_3102</name>
</gene>
<keyword id="KW-0963">Cytoplasm</keyword>
<keyword id="KW-0378">Hydrolase</keyword>
<keyword id="KW-1185">Reference proteome</keyword>
<keyword id="KW-0694">RNA-binding</keyword>
<keyword id="KW-0820">tRNA-binding</keyword>
<accession>Q1QIV8</accession>